<evidence type="ECO:0000255" key="1">
    <source>
        <dbReference type="HAMAP-Rule" id="MF_00735"/>
    </source>
</evidence>
<protein>
    <recommendedName>
        <fullName evidence="1">Ribosomal protein L11 methyltransferase</fullName>
        <shortName evidence="1">L11 Mtase</shortName>
        <ecNumber evidence="1">2.1.1.-</ecNumber>
    </recommendedName>
</protein>
<reference key="1">
    <citation type="journal article" date="2005" name="Proc. Natl. Acad. Sci. U.S.A.">
        <title>Whole genome sequence of Staphylococcus saprophyticus reveals the pathogenesis of uncomplicated urinary tract infection.</title>
        <authorList>
            <person name="Kuroda M."/>
            <person name="Yamashita A."/>
            <person name="Hirakawa H."/>
            <person name="Kumano M."/>
            <person name="Morikawa K."/>
            <person name="Higashide M."/>
            <person name="Maruyama A."/>
            <person name="Inose Y."/>
            <person name="Matoba K."/>
            <person name="Toh H."/>
            <person name="Kuhara S."/>
            <person name="Hattori M."/>
            <person name="Ohta T."/>
        </authorList>
    </citation>
    <scope>NUCLEOTIDE SEQUENCE [LARGE SCALE GENOMIC DNA]</scope>
    <source>
        <strain>ATCC 15305 / DSM 20229 / NCIMB 8711 / NCTC 7292 / S-41</strain>
    </source>
</reference>
<keyword id="KW-0963">Cytoplasm</keyword>
<keyword id="KW-0489">Methyltransferase</keyword>
<keyword id="KW-1185">Reference proteome</keyword>
<keyword id="KW-0949">S-adenosyl-L-methionine</keyword>
<keyword id="KW-0808">Transferase</keyword>
<gene>
    <name evidence="1" type="primary">prmA</name>
    <name type="ordered locus">SSP1179</name>
</gene>
<feature type="chain" id="PRO_0000192312" description="Ribosomal protein L11 methyltransferase">
    <location>
        <begin position="1"/>
        <end position="312"/>
    </location>
</feature>
<feature type="binding site" evidence="1">
    <location>
        <position position="160"/>
    </location>
    <ligand>
        <name>S-adenosyl-L-methionine</name>
        <dbReference type="ChEBI" id="CHEBI:59789"/>
    </ligand>
</feature>
<feature type="binding site" evidence="1">
    <location>
        <position position="181"/>
    </location>
    <ligand>
        <name>S-adenosyl-L-methionine</name>
        <dbReference type="ChEBI" id="CHEBI:59789"/>
    </ligand>
</feature>
<feature type="binding site" evidence="1">
    <location>
        <position position="203"/>
    </location>
    <ligand>
        <name>S-adenosyl-L-methionine</name>
        <dbReference type="ChEBI" id="CHEBI:59789"/>
    </ligand>
</feature>
<feature type="binding site" evidence="1">
    <location>
        <position position="246"/>
    </location>
    <ligand>
        <name>S-adenosyl-L-methionine</name>
        <dbReference type="ChEBI" id="CHEBI:59789"/>
    </ligand>
</feature>
<accession>Q49Y20</accession>
<comment type="function">
    <text evidence="1">Methylates ribosomal protein L11.</text>
</comment>
<comment type="catalytic activity">
    <reaction evidence="1">
        <text>L-lysyl-[protein] + 3 S-adenosyl-L-methionine = N(6),N(6),N(6)-trimethyl-L-lysyl-[protein] + 3 S-adenosyl-L-homocysteine + 3 H(+)</text>
        <dbReference type="Rhea" id="RHEA:54192"/>
        <dbReference type="Rhea" id="RHEA-COMP:9752"/>
        <dbReference type="Rhea" id="RHEA-COMP:13826"/>
        <dbReference type="ChEBI" id="CHEBI:15378"/>
        <dbReference type="ChEBI" id="CHEBI:29969"/>
        <dbReference type="ChEBI" id="CHEBI:57856"/>
        <dbReference type="ChEBI" id="CHEBI:59789"/>
        <dbReference type="ChEBI" id="CHEBI:61961"/>
    </reaction>
</comment>
<comment type="subcellular location">
    <subcellularLocation>
        <location evidence="1">Cytoplasm</location>
    </subcellularLocation>
</comment>
<comment type="similarity">
    <text evidence="1">Belongs to the methyltransferase superfamily. PrmA family.</text>
</comment>
<sequence>MNWTEVAIVANHEVSPIITNLLEDYGSNGVVIEDSEDLTHDFEDKYGEIYALNAEDYPTQGVRVKAYFNEIKYTKDFQEKLIQSLKDIESLDLDLFSFDEQTIREQDWENEWKHYFHPFRASEKFTIVPSWETYQQEDDSELCIELDPGMAFGTGDHPTTSMCLKAIEAYVKSSDSVIDVGTGSGILSIAAHLLGVKRIKALDVDEMAVRVAKENFQKNNCEYAIEAVPGNLLKEETEKFDVVIANILAHIIEEMIDDAYNTLNKDGYFITSGIIEEKHEAIVEHMKRSGFEIVSINHDNSWVCIVGQKVSD</sequence>
<dbReference type="EC" id="2.1.1.-" evidence="1"/>
<dbReference type="EMBL" id="AP008934">
    <property type="protein sequence ID" value="BAE18324.1"/>
    <property type="molecule type" value="Genomic_DNA"/>
</dbReference>
<dbReference type="RefSeq" id="WP_011302994.1">
    <property type="nucleotide sequence ID" value="NZ_MTGA01000038.1"/>
</dbReference>
<dbReference type="SMR" id="Q49Y20"/>
<dbReference type="GeneID" id="3616926"/>
<dbReference type="KEGG" id="ssp:SSP1179"/>
<dbReference type="PATRIC" id="fig|342451.11.peg.1177"/>
<dbReference type="eggNOG" id="COG2264">
    <property type="taxonomic scope" value="Bacteria"/>
</dbReference>
<dbReference type="HOGENOM" id="CLU_049382_0_1_9"/>
<dbReference type="OrthoDB" id="9785995at2"/>
<dbReference type="Proteomes" id="UP000006371">
    <property type="component" value="Chromosome"/>
</dbReference>
<dbReference type="GO" id="GO:0005737">
    <property type="term" value="C:cytoplasm"/>
    <property type="evidence" value="ECO:0007669"/>
    <property type="project" value="UniProtKB-SubCell"/>
</dbReference>
<dbReference type="GO" id="GO:0016279">
    <property type="term" value="F:protein-lysine N-methyltransferase activity"/>
    <property type="evidence" value="ECO:0007669"/>
    <property type="project" value="RHEA"/>
</dbReference>
<dbReference type="GO" id="GO:0032259">
    <property type="term" value="P:methylation"/>
    <property type="evidence" value="ECO:0007669"/>
    <property type="project" value="UniProtKB-KW"/>
</dbReference>
<dbReference type="CDD" id="cd02440">
    <property type="entry name" value="AdoMet_MTases"/>
    <property type="match status" value="1"/>
</dbReference>
<dbReference type="Gene3D" id="3.40.50.150">
    <property type="entry name" value="Vaccinia Virus protein VP39"/>
    <property type="match status" value="1"/>
</dbReference>
<dbReference type="HAMAP" id="MF_00735">
    <property type="entry name" value="Methyltr_PrmA"/>
    <property type="match status" value="1"/>
</dbReference>
<dbReference type="InterPro" id="IPR050078">
    <property type="entry name" value="Ribosomal_L11_MeTrfase_PrmA"/>
</dbReference>
<dbReference type="InterPro" id="IPR004498">
    <property type="entry name" value="Ribosomal_PrmA_MeTrfase"/>
</dbReference>
<dbReference type="InterPro" id="IPR029063">
    <property type="entry name" value="SAM-dependent_MTases_sf"/>
</dbReference>
<dbReference type="NCBIfam" id="TIGR00406">
    <property type="entry name" value="prmA"/>
    <property type="match status" value="1"/>
</dbReference>
<dbReference type="PANTHER" id="PTHR43648">
    <property type="entry name" value="ELECTRON TRANSFER FLAVOPROTEIN BETA SUBUNIT LYSINE METHYLTRANSFERASE"/>
    <property type="match status" value="1"/>
</dbReference>
<dbReference type="PANTHER" id="PTHR43648:SF1">
    <property type="entry name" value="ELECTRON TRANSFER FLAVOPROTEIN BETA SUBUNIT LYSINE METHYLTRANSFERASE"/>
    <property type="match status" value="1"/>
</dbReference>
<dbReference type="Pfam" id="PF06325">
    <property type="entry name" value="PrmA"/>
    <property type="match status" value="1"/>
</dbReference>
<dbReference type="PIRSF" id="PIRSF000401">
    <property type="entry name" value="RPL11_MTase"/>
    <property type="match status" value="1"/>
</dbReference>
<dbReference type="SUPFAM" id="SSF53335">
    <property type="entry name" value="S-adenosyl-L-methionine-dependent methyltransferases"/>
    <property type="match status" value="1"/>
</dbReference>
<name>PRMA_STAS1</name>
<organism>
    <name type="scientific">Staphylococcus saprophyticus subsp. saprophyticus (strain ATCC 15305 / DSM 20229 / NCIMB 8711 / NCTC 7292 / S-41)</name>
    <dbReference type="NCBI Taxonomy" id="342451"/>
    <lineage>
        <taxon>Bacteria</taxon>
        <taxon>Bacillati</taxon>
        <taxon>Bacillota</taxon>
        <taxon>Bacilli</taxon>
        <taxon>Bacillales</taxon>
        <taxon>Staphylococcaceae</taxon>
        <taxon>Staphylococcus</taxon>
    </lineage>
</organism>
<proteinExistence type="inferred from homology"/>